<keyword id="KW-1064">Adaptive immunity</keyword>
<keyword id="KW-1003">Cell membrane</keyword>
<keyword id="KW-1015">Disulfide bond</keyword>
<keyword id="KW-0325">Glycoprotein</keyword>
<keyword id="KW-0391">Immunity</keyword>
<keyword id="KW-0393">Immunoglobulin domain</keyword>
<keyword id="KW-0449">Lipoprotein</keyword>
<keyword id="KW-0472">Membrane</keyword>
<keyword id="KW-0564">Palmitate</keyword>
<keyword id="KW-1185">Reference proteome</keyword>
<keyword id="KW-0732">Signal</keyword>
<keyword id="KW-0812">Transmembrane</keyword>
<keyword id="KW-1133">Transmembrane helix</keyword>
<reference key="1">
    <citation type="journal article" date="1985" name="EMBO J.">
        <title>Purification, chain separation and sequence of the MRC OX-8 antigen, a marker of rat cytotoxic T lymphocytes.</title>
        <authorList>
            <person name="Johnson P."/>
            <person name="Gagnon J."/>
            <person name="Barclay A.N."/>
            <person name="Williams A.F."/>
        </authorList>
    </citation>
    <scope>NUCLEOTIDE SEQUENCE [MRNA]</scope>
</reference>
<reference key="2">
    <citation type="journal article" date="2004" name="Genome Res.">
        <title>The status, quality, and expansion of the NIH full-length cDNA project: the Mammalian Gene Collection (MGC).</title>
        <authorList>
            <consortium name="The MGC Project Team"/>
        </authorList>
    </citation>
    <scope>NUCLEOTIDE SEQUENCE [LARGE SCALE MRNA]</scope>
    <source>
        <tissue>Thymus</tissue>
    </source>
</reference>
<reference key="3">
    <citation type="journal article" date="1991" name="Biochem. Biophys. Res. Commun.">
        <title>Glycosylation sites identified by detection of glycosylated amino acids released from Edman degradation: the identification of Xaa-Pro-Xaa-Xaa as a motif for Thr-O-glycosylation.</title>
        <authorList>
            <person name="Gooley A.A."/>
            <person name="Classon B.J."/>
            <person name="Marschalek R."/>
            <person name="Williams K.L."/>
        </authorList>
    </citation>
    <scope>GLYCOSYLATION AT ASN-63; THR-144; THR-148; THR-152; THR-158 AND THR-160</scope>
</reference>
<proteinExistence type="evidence at protein level"/>
<comment type="function">
    <text evidence="1">Integral membrane glycoprotein that plays an essential role in the immune response and serves multiple functions in responses against both external and internal offenses. In T-cells, functions primarily as a coreceptor for MHC class I molecule:peptide complex. The antigens presented by class I peptides are derived from cytosolic proteins while class II derived from extracellular proteins. Interacts simultaneously with the T-cell receptor (TCR) and the MHC class I proteins presented by antigen presenting cells (APCs). In turn, recruits the Src kinase LCK to the vicinity of the TCR-CD3 complex. LCK then initiates different intracellular signaling pathways by phosphorylating various substrates ultimately leading to lymphokine production, motility, adhesion and activation of cytotoxic T-lymphocytes (CTLs). This mechanism enables CTLs to recognize and eliminate infected cells and tumor cells. In NK-cells, the presence of CD8A homodimers at the cell surface provides a survival mechanism allowing conjugation and lysis of multiple target cells. CD8A homodimer molecules also promote the survival and differentiation of activated lymphocytes into memory CD8 T-cells.</text>
</comment>
<comment type="subunit">
    <text evidence="1">Forms disulfide-linked heterodimers with CD8B at the cell surface. Also forms homodimers in several cell types including NK-cells or peripheral blood T-lymphocytes. Interacts with the MHC class I HLA-A/B2M dimer. Interacts with LCK in a zinc-dependent manner.</text>
</comment>
<comment type="subcellular location">
    <subcellularLocation>
        <location evidence="1">Cell membrane</location>
        <topology evidence="1">Single-pass type I membrane protein</topology>
    </subcellularLocation>
    <text evidence="1">CD8A localizes to lipid rafts only when associated with its partner CD8B.</text>
</comment>
<comment type="PTM">
    <text evidence="1">Palmitoylated, but association with CD8B seems to be more important for the enrichment of CD8A in lipid rafts.</text>
</comment>
<comment type="PTM">
    <text evidence="1">O-glycosylated.</text>
</comment>
<comment type="PTM">
    <text evidence="1">Phosphorylated in cytotoxic T-lymphocytes (CTLs) following activation.</text>
</comment>
<dbReference type="EMBL" id="X03015">
    <property type="protein sequence ID" value="CAA26798.1"/>
    <property type="molecule type" value="mRNA"/>
</dbReference>
<dbReference type="EMBL" id="BC088126">
    <property type="protein sequence ID" value="AAH88126.1"/>
    <property type="molecule type" value="mRNA"/>
</dbReference>
<dbReference type="PIR" id="A24637">
    <property type="entry name" value="A24637"/>
</dbReference>
<dbReference type="RefSeq" id="NP_113726.1">
    <property type="nucleotide sequence ID" value="NM_031538.2"/>
</dbReference>
<dbReference type="RefSeq" id="XP_006236692.1">
    <property type="nucleotide sequence ID" value="XM_006236630.3"/>
</dbReference>
<dbReference type="RefSeq" id="XP_008761198.1">
    <property type="nucleotide sequence ID" value="XM_008762976.2"/>
</dbReference>
<dbReference type="SMR" id="P07725"/>
<dbReference type="DIP" id="DIP-60779N"/>
<dbReference type="FunCoup" id="P07725">
    <property type="interactions" value="670"/>
</dbReference>
<dbReference type="IntAct" id="P07725">
    <property type="interactions" value="1"/>
</dbReference>
<dbReference type="STRING" id="10116.ENSRNOP00000009516"/>
<dbReference type="GlyCosmos" id="P07725">
    <property type="glycosylation" value="6 sites, No reported glycans"/>
</dbReference>
<dbReference type="GlyGen" id="P07725">
    <property type="glycosylation" value="6 sites"/>
</dbReference>
<dbReference type="iPTMnet" id="P07725"/>
<dbReference type="PhosphoSitePlus" id="P07725"/>
<dbReference type="PaxDb" id="10116-ENSRNOP00000009516"/>
<dbReference type="Ensembl" id="ENSRNOT00000009515.5">
    <property type="protein sequence ID" value="ENSRNOP00000009516.3"/>
    <property type="gene ID" value="ENSRNOG00000007178.5"/>
</dbReference>
<dbReference type="GeneID" id="24930"/>
<dbReference type="KEGG" id="rno:24930"/>
<dbReference type="UCSC" id="RGD:2316">
    <property type="organism name" value="rat"/>
</dbReference>
<dbReference type="AGR" id="RGD:2316"/>
<dbReference type="CTD" id="925"/>
<dbReference type="RGD" id="2316">
    <property type="gene designation" value="Cd8a"/>
</dbReference>
<dbReference type="eggNOG" id="ENOG502SAZN">
    <property type="taxonomic scope" value="Eukaryota"/>
</dbReference>
<dbReference type="GeneTree" id="ENSGT00940000156588"/>
<dbReference type="HOGENOM" id="CLU_085753_0_0_1"/>
<dbReference type="InParanoid" id="P07725"/>
<dbReference type="OMA" id="KCKCIRP"/>
<dbReference type="OrthoDB" id="9906515at2759"/>
<dbReference type="PhylomeDB" id="P07725"/>
<dbReference type="TreeFam" id="TF336070"/>
<dbReference type="Reactome" id="R-RNO-198933">
    <property type="pathway name" value="Immunoregulatory interactions between a Lymphoid and a non-Lymphoid cell"/>
</dbReference>
<dbReference type="PRO" id="PR:P07725"/>
<dbReference type="Proteomes" id="UP000002494">
    <property type="component" value="Chromosome 4"/>
</dbReference>
<dbReference type="Bgee" id="ENSRNOG00000007178">
    <property type="expression patterns" value="Expressed in thymus and 17 other cell types or tissues"/>
</dbReference>
<dbReference type="GO" id="GO:0009986">
    <property type="term" value="C:cell surface"/>
    <property type="evidence" value="ECO:0000314"/>
    <property type="project" value="RGD"/>
</dbReference>
<dbReference type="GO" id="GO:0009897">
    <property type="term" value="C:external side of plasma membrane"/>
    <property type="evidence" value="ECO:0000266"/>
    <property type="project" value="RGD"/>
</dbReference>
<dbReference type="GO" id="GO:0005886">
    <property type="term" value="C:plasma membrane"/>
    <property type="evidence" value="ECO:0000266"/>
    <property type="project" value="RGD"/>
</dbReference>
<dbReference type="GO" id="GO:0044853">
    <property type="term" value="C:plasma membrane raft"/>
    <property type="evidence" value="ECO:0000266"/>
    <property type="project" value="RGD"/>
</dbReference>
<dbReference type="GO" id="GO:0043235">
    <property type="term" value="C:receptor complex"/>
    <property type="evidence" value="ECO:0000266"/>
    <property type="project" value="RGD"/>
</dbReference>
<dbReference type="GO" id="GO:0042802">
    <property type="term" value="F:identical protein binding"/>
    <property type="evidence" value="ECO:0000266"/>
    <property type="project" value="RGD"/>
</dbReference>
<dbReference type="GO" id="GO:0023024">
    <property type="term" value="F:MHC class I protein complex binding"/>
    <property type="evidence" value="ECO:0000266"/>
    <property type="project" value="RGD"/>
</dbReference>
<dbReference type="GO" id="GO:0019901">
    <property type="term" value="F:protein kinase binding"/>
    <property type="evidence" value="ECO:0000353"/>
    <property type="project" value="RGD"/>
</dbReference>
<dbReference type="GO" id="GO:0019722">
    <property type="term" value="P:calcium-mediated signaling"/>
    <property type="evidence" value="ECO:0000266"/>
    <property type="project" value="RGD"/>
</dbReference>
<dbReference type="GO" id="GO:0007166">
    <property type="term" value="P:cell surface receptor signaling pathway"/>
    <property type="evidence" value="ECO:0000266"/>
    <property type="project" value="RGD"/>
</dbReference>
<dbReference type="GO" id="GO:0045065">
    <property type="term" value="P:cytotoxic T cell differentiation"/>
    <property type="evidence" value="ECO:0000266"/>
    <property type="project" value="RGD"/>
</dbReference>
<dbReference type="GO" id="GO:0051607">
    <property type="term" value="P:defense response to virus"/>
    <property type="evidence" value="ECO:0000266"/>
    <property type="project" value="RGD"/>
</dbReference>
<dbReference type="GO" id="GO:0050850">
    <property type="term" value="P:positive regulation of calcium-mediated signaling"/>
    <property type="evidence" value="ECO:0000266"/>
    <property type="project" value="RGD"/>
</dbReference>
<dbReference type="GO" id="GO:1904313">
    <property type="term" value="P:response to methamphetamine hydrochloride"/>
    <property type="evidence" value="ECO:0000270"/>
    <property type="project" value="RGD"/>
</dbReference>
<dbReference type="GO" id="GO:0042110">
    <property type="term" value="P:T cell activation"/>
    <property type="evidence" value="ECO:0000266"/>
    <property type="project" value="RGD"/>
</dbReference>
<dbReference type="GO" id="GO:0002456">
    <property type="term" value="P:T cell mediated immunity"/>
    <property type="evidence" value="ECO:0000266"/>
    <property type="project" value="RGD"/>
</dbReference>
<dbReference type="GO" id="GO:0050852">
    <property type="term" value="P:T cell receptor signaling pathway"/>
    <property type="evidence" value="ECO:0000266"/>
    <property type="project" value="RGD"/>
</dbReference>
<dbReference type="Gene3D" id="2.60.40.10">
    <property type="entry name" value="Immunoglobulins"/>
    <property type="match status" value="1"/>
</dbReference>
<dbReference type="InterPro" id="IPR015468">
    <property type="entry name" value="CD8_asu"/>
</dbReference>
<dbReference type="InterPro" id="IPR007110">
    <property type="entry name" value="Ig-like_dom"/>
</dbReference>
<dbReference type="InterPro" id="IPR036179">
    <property type="entry name" value="Ig-like_dom_sf"/>
</dbReference>
<dbReference type="InterPro" id="IPR013783">
    <property type="entry name" value="Ig-like_fold"/>
</dbReference>
<dbReference type="InterPro" id="IPR003599">
    <property type="entry name" value="Ig_sub"/>
</dbReference>
<dbReference type="InterPro" id="IPR013106">
    <property type="entry name" value="Ig_V-set"/>
</dbReference>
<dbReference type="PANTHER" id="PTHR10441">
    <property type="entry name" value="CD8 ALPHA CHAIN"/>
    <property type="match status" value="1"/>
</dbReference>
<dbReference type="PANTHER" id="PTHR10441:SF2">
    <property type="entry name" value="T-CELL SURFACE GLYCOPROTEIN CD8 ALPHA CHAIN"/>
    <property type="match status" value="1"/>
</dbReference>
<dbReference type="Pfam" id="PF07686">
    <property type="entry name" value="V-set"/>
    <property type="match status" value="1"/>
</dbReference>
<dbReference type="SMART" id="SM00409">
    <property type="entry name" value="IG"/>
    <property type="match status" value="1"/>
</dbReference>
<dbReference type="SUPFAM" id="SSF48726">
    <property type="entry name" value="Immunoglobulin"/>
    <property type="match status" value="1"/>
</dbReference>
<dbReference type="PROSITE" id="PS50835">
    <property type="entry name" value="IG_LIKE"/>
    <property type="match status" value="1"/>
</dbReference>
<evidence type="ECO:0000250" key="1">
    <source>
        <dbReference type="UniProtKB" id="P01732"/>
    </source>
</evidence>
<evidence type="ECO:0000255" key="2"/>
<evidence type="ECO:0000255" key="3">
    <source>
        <dbReference type="PROSITE-ProRule" id="PRU00114"/>
    </source>
</evidence>
<evidence type="ECO:0000256" key="4">
    <source>
        <dbReference type="SAM" id="MobiDB-lite"/>
    </source>
</evidence>
<evidence type="ECO:0000269" key="5">
    <source>
    </source>
</evidence>
<evidence type="ECO:0000305" key="6">
    <source>
    </source>
</evidence>
<protein>
    <recommendedName>
        <fullName>T-cell surface glycoprotein CD8 alpha chain</fullName>
    </recommendedName>
    <alternativeName>
        <fullName>CD8 antigen 32 kDa chain</fullName>
    </alternativeName>
    <alternativeName>
        <fullName>OX-8 membrane antigen</fullName>
    </alternativeName>
    <cdAntigenName>CD8a</cdAntigenName>
</protein>
<feature type="signal peptide" evidence="2">
    <location>
        <begin position="1"/>
        <end position="26"/>
    </location>
</feature>
<feature type="chain" id="PRO_0000014641" description="T-cell surface glycoprotein CD8 alpha chain">
    <location>
        <begin position="27"/>
        <end position="236"/>
    </location>
</feature>
<feature type="topological domain" description="Extracellular" evidence="2">
    <location>
        <begin position="27"/>
        <end position="189"/>
    </location>
</feature>
<feature type="transmembrane region" description="Helical" evidence="2">
    <location>
        <begin position="190"/>
        <end position="210"/>
    </location>
</feature>
<feature type="topological domain" description="Cytoplasmic" evidence="2">
    <location>
        <begin position="211"/>
        <end position="236"/>
    </location>
</feature>
<feature type="domain" description="Ig-like V-type">
    <location>
        <begin position="27"/>
        <end position="130"/>
    </location>
</feature>
<feature type="region of interest" description="Disordered" evidence="4">
    <location>
        <begin position="150"/>
        <end position="170"/>
    </location>
</feature>
<feature type="lipid moiety-binding region" description="S-palmitoyl cysteine" evidence="1">
    <location>
        <position position="211"/>
    </location>
</feature>
<feature type="glycosylation site" description="N-linked (GlcNAc...) asparagine" evidence="6">
    <location>
        <position position="63"/>
    </location>
</feature>
<feature type="glycosylation site" description="O-linked (GalNAc...) threonine; partial" evidence="5">
    <location>
        <position position="144"/>
    </location>
</feature>
<feature type="glycosylation site" description="O-linked (GalNAc...) threonine" evidence="5">
    <location>
        <position position="148"/>
    </location>
</feature>
<feature type="glycosylation site" description="O-linked (GalNAc...) threonine" evidence="5">
    <location>
        <position position="152"/>
    </location>
</feature>
<feature type="glycosylation site" description="O-linked (GalNAc...) threonine" evidence="5">
    <location>
        <position position="158"/>
    </location>
</feature>
<feature type="glycosylation site" description="O-linked (GalNAc...) threonine" evidence="5">
    <location>
        <position position="160"/>
    </location>
</feature>
<feature type="disulfide bond" evidence="3">
    <location>
        <begin position="47"/>
        <end position="119"/>
    </location>
</feature>
<organism>
    <name type="scientific">Rattus norvegicus</name>
    <name type="common">Rat</name>
    <dbReference type="NCBI Taxonomy" id="10116"/>
    <lineage>
        <taxon>Eukaryota</taxon>
        <taxon>Metazoa</taxon>
        <taxon>Chordata</taxon>
        <taxon>Craniata</taxon>
        <taxon>Vertebrata</taxon>
        <taxon>Euteleostomi</taxon>
        <taxon>Mammalia</taxon>
        <taxon>Eutheria</taxon>
        <taxon>Euarchontoglires</taxon>
        <taxon>Glires</taxon>
        <taxon>Rodentia</taxon>
        <taxon>Myomorpha</taxon>
        <taxon>Muroidea</taxon>
        <taxon>Muridae</taxon>
        <taxon>Murinae</taxon>
        <taxon>Rattus</taxon>
    </lineage>
</organism>
<sequence length="236" mass="26196">MASRVICFLSLNLLLLDVITRLQVSGQLQLSPKKVDAEIGQEVKLTCEVLRDTSQGCSWLFRNSSSELLQPTFIIYVSSSRSKLNDILDPNLFSARKENNKYILTLSKFSTKNQGYYFCSITSNSVMYFSPLVPVFQKVNSIITKPVTRAPTPVPPPTGTPRPLRPEACRPGASGSVEGMGLGFACDIYIWAPLAGICAVLLLSLVITLICCHRNRRRVCKCPRPLVKPRPSEKFV</sequence>
<gene>
    <name type="primary">Cd8a</name>
</gene>
<name>CD8A_RAT</name>
<accession>P07725</accession>